<protein>
    <recommendedName>
        <fullName>Outer membrane protein 40Va</fullName>
        <shortName>Omp40Va</shortName>
    </recommendedName>
</protein>
<dbReference type="STRING" id="663.BAU10_04045"/>
<dbReference type="eggNOG" id="COG3203">
    <property type="taxonomic scope" value="Bacteria"/>
</dbReference>
<dbReference type="GO" id="GO:0009279">
    <property type="term" value="C:cell outer membrane"/>
    <property type="evidence" value="ECO:0007669"/>
    <property type="project" value="UniProtKB-SubCell"/>
</dbReference>
<dbReference type="GO" id="GO:0046930">
    <property type="term" value="C:pore complex"/>
    <property type="evidence" value="ECO:0007669"/>
    <property type="project" value="UniProtKB-KW"/>
</dbReference>
<dbReference type="GO" id="GO:0015288">
    <property type="term" value="F:porin activity"/>
    <property type="evidence" value="ECO:0007669"/>
    <property type="project" value="UniProtKB-KW"/>
</dbReference>
<dbReference type="GO" id="GO:0006811">
    <property type="term" value="P:monoatomic ion transport"/>
    <property type="evidence" value="ECO:0007669"/>
    <property type="project" value="UniProtKB-KW"/>
</dbReference>
<reference evidence="6" key="1">
    <citation type="submission" date="2001-10" db="UniProtKB">
        <title>Characterization of major outer membrane proteins of Vibrio alginolyticus and the stability against proteases.</title>
        <authorList>
            <person name="Onji M."/>
            <person name="Hirabayashi J."/>
            <person name="Suzuki S."/>
        </authorList>
    </citation>
    <scope>PROTEIN SEQUENCE</scope>
    <scope>SUBCELLULAR LOCATION</scope>
    <source>
        <strain>ATCC 17749 / DSM 2171 / NBRC 15630 / NCIMB 1903 / XII-53</strain>
    </source>
</reference>
<proteinExistence type="evidence at protein level"/>
<evidence type="ECO:0000250" key="1"/>
<evidence type="ECO:0000250" key="2">
    <source>
        <dbReference type="UniProtKB" id="P06996"/>
    </source>
</evidence>
<evidence type="ECO:0000255" key="3"/>
<evidence type="ECO:0000269" key="4">
    <source ref="1"/>
</evidence>
<evidence type="ECO:0000303" key="5">
    <source ref="1"/>
</evidence>
<evidence type="ECO:0000305" key="6"/>
<feature type="chain" id="PRO_0000182817" description="Outer membrane protein 40Va">
    <location>
        <begin position="1"/>
        <end position="20" status="greater than"/>
    </location>
</feature>
<feature type="non-terminal residue" evidence="5">
    <location>
        <position position="20"/>
    </location>
</feature>
<comment type="function">
    <text evidence="1">Forms pores that allow passive diffusion of small molecules across the outer membrane.</text>
</comment>
<comment type="subunit">
    <text evidence="2">Homotrimer.</text>
</comment>
<comment type="subcellular location">
    <subcellularLocation>
        <location evidence="4">Cell outer membrane</location>
    </subcellularLocation>
</comment>
<comment type="similarity">
    <text evidence="3">Belongs to the Gram-negative porin family.</text>
</comment>
<keyword id="KW-0998">Cell outer membrane</keyword>
<keyword id="KW-0903">Direct protein sequencing</keyword>
<keyword id="KW-0406">Ion transport</keyword>
<keyword id="KW-0472">Membrane</keyword>
<keyword id="KW-0626">Porin</keyword>
<keyword id="KW-0812">Transmembrane</keyword>
<keyword id="KW-1134">Transmembrane beta strand</keyword>
<keyword id="KW-0813">Transport</keyword>
<accession>P83149</accession>
<sequence>AEVFKSEEGSVDFYGQLRPA</sequence>
<name>OM4VA_VIBAL</name>
<organism>
    <name type="scientific">Vibrio alginolyticus</name>
    <dbReference type="NCBI Taxonomy" id="663"/>
    <lineage>
        <taxon>Bacteria</taxon>
        <taxon>Pseudomonadati</taxon>
        <taxon>Pseudomonadota</taxon>
        <taxon>Gammaproteobacteria</taxon>
        <taxon>Vibrionales</taxon>
        <taxon>Vibrionaceae</taxon>
        <taxon>Vibrio</taxon>
    </lineage>
</organism>